<organism>
    <name type="scientific">Pan troglodytes</name>
    <name type="common">Chimpanzee</name>
    <dbReference type="NCBI Taxonomy" id="9598"/>
    <lineage>
        <taxon>Eukaryota</taxon>
        <taxon>Metazoa</taxon>
        <taxon>Chordata</taxon>
        <taxon>Craniata</taxon>
        <taxon>Vertebrata</taxon>
        <taxon>Euteleostomi</taxon>
        <taxon>Mammalia</taxon>
        <taxon>Eutheria</taxon>
        <taxon>Euarchontoglires</taxon>
        <taxon>Primates</taxon>
        <taxon>Haplorrhini</taxon>
        <taxon>Catarrhini</taxon>
        <taxon>Hominidae</taxon>
        <taxon>Pan</taxon>
    </lineage>
</organism>
<dbReference type="EMBL" id="AB222124">
    <property type="protein sequence ID" value="BAF62369.1"/>
    <property type="molecule type" value="mRNA"/>
</dbReference>
<dbReference type="RefSeq" id="NP_001092019.1">
    <property type="nucleotide sequence ID" value="NM_001098549.1"/>
</dbReference>
<dbReference type="STRING" id="9598.ENSPTRP00000055998"/>
<dbReference type="MEROPS" id="I21.001"/>
<dbReference type="PaxDb" id="9598-ENSPTRP00000055998"/>
<dbReference type="GeneID" id="453292"/>
<dbReference type="KEGG" id="ptr:453292"/>
<dbReference type="CTD" id="6447"/>
<dbReference type="eggNOG" id="KOG4187">
    <property type="taxonomic scope" value="Eukaryota"/>
</dbReference>
<dbReference type="HOGENOM" id="CLU_113154_0_0_1"/>
<dbReference type="InParanoid" id="A5A6J6"/>
<dbReference type="TreeFam" id="TF314328"/>
<dbReference type="Proteomes" id="UP000002277">
    <property type="component" value="Unplaced"/>
</dbReference>
<dbReference type="GO" id="GO:0005576">
    <property type="term" value="C:extracellular region"/>
    <property type="evidence" value="ECO:0007669"/>
    <property type="project" value="UniProtKB-SubCell"/>
</dbReference>
<dbReference type="GO" id="GO:0030141">
    <property type="term" value="C:secretory granule"/>
    <property type="evidence" value="ECO:0007669"/>
    <property type="project" value="InterPro"/>
</dbReference>
<dbReference type="GO" id="GO:0030234">
    <property type="term" value="F:enzyme regulator activity"/>
    <property type="evidence" value="ECO:0000318"/>
    <property type="project" value="GO_Central"/>
</dbReference>
<dbReference type="GO" id="GO:0007218">
    <property type="term" value="P:neuropeptide signaling pathway"/>
    <property type="evidence" value="ECO:0007669"/>
    <property type="project" value="UniProtKB-KW"/>
</dbReference>
<dbReference type="GO" id="GO:0046883">
    <property type="term" value="P:regulation of hormone secretion"/>
    <property type="evidence" value="ECO:0000318"/>
    <property type="project" value="GO_Central"/>
</dbReference>
<dbReference type="InterPro" id="IPR007945">
    <property type="entry name" value="Secretogranin_V"/>
</dbReference>
<dbReference type="PANTHER" id="PTHR12738">
    <property type="entry name" value="NEUROENDOCRINE PROTEIN 7B2"/>
    <property type="match status" value="1"/>
</dbReference>
<dbReference type="PANTHER" id="PTHR12738:SF0">
    <property type="entry name" value="NEUROENDOCRINE PROTEIN 7B2"/>
    <property type="match status" value="1"/>
</dbReference>
<dbReference type="Pfam" id="PF05281">
    <property type="entry name" value="Secretogranin_V"/>
    <property type="match status" value="1"/>
</dbReference>
<protein>
    <recommendedName>
        <fullName>Neuroendocrine protein 7B2</fullName>
    </recommendedName>
    <alternativeName>
        <fullName>Secretogranin-5</fullName>
    </alternativeName>
    <component>
        <recommendedName>
            <fullName>N-terminal peptide</fullName>
        </recommendedName>
    </component>
    <component>
        <recommendedName>
            <fullName>C-terminal peptide</fullName>
        </recommendedName>
    </component>
</protein>
<proteinExistence type="evidence at transcript level"/>
<accession>A5A6J6</accession>
<reference key="1">
    <citation type="journal article" date="2007" name="Gene">
        <title>Mapping of chimpanzee full-length cDNAs onto the human genome unveils large potential divergence of the transcriptome.</title>
        <authorList>
            <person name="Sakate R."/>
            <person name="Suto Y."/>
            <person name="Imanishi T."/>
            <person name="Tanoue T."/>
            <person name="Hida M."/>
            <person name="Hayasaka I."/>
            <person name="Kusuda J."/>
            <person name="Gojobori T."/>
            <person name="Hashimoto K."/>
            <person name="Hirai M."/>
        </authorList>
    </citation>
    <scope>NUCLEOTIDE SEQUENCE [MRNA]</scope>
    <source>
        <tissue>Brain</tissue>
    </source>
</reference>
<comment type="function">
    <text evidence="3">Acts as a molecular chaperone for PCSK2/PC2, preventing its premature activation in the regulated secretory pathway. Binds to inactive PCSK2 in the endoplasmic reticulum and facilitates its transport from there to later compartments of the secretory pathway where it is proteolytically matured and activated. Also required for cleavage of PCSK2 but does not appear to be involved in its folding. Plays a role in regulating pituitary hormone secretion. The C-terminal peptide inhibits PCSK2 in vitro.</text>
</comment>
<comment type="subunit">
    <text evidence="2">Interacts with PCSK2/PC2 early in the secretory pathway. Dissociation occurs at later stages.</text>
</comment>
<comment type="subcellular location">
    <subcellularLocation>
        <location evidence="1">Secreted</location>
    </subcellularLocation>
    <text evidence="1">Neuroendocrine and endocrine secretory granules.</text>
</comment>
<comment type="PTM">
    <text evidence="3">Proteolytically cleaved in the Golgi by a furin-like convertase to generate bioactive peptides.</text>
</comment>
<comment type="PTM">
    <text evidence="3">Sulfated on tyrosine residues.</text>
</comment>
<comment type="similarity">
    <text evidence="6">Belongs to the 7B2 family.</text>
</comment>
<evidence type="ECO:0000250" key="1">
    <source>
        <dbReference type="UniProtKB" id="P01165"/>
    </source>
</evidence>
<evidence type="ECO:0000250" key="2">
    <source>
        <dbReference type="UniProtKB" id="P05408"/>
    </source>
</evidence>
<evidence type="ECO:0000250" key="3">
    <source>
        <dbReference type="UniProtKB" id="P12961"/>
    </source>
</evidence>
<evidence type="ECO:0000250" key="4">
    <source>
        <dbReference type="UniProtKB" id="P18844"/>
    </source>
</evidence>
<evidence type="ECO:0000256" key="5">
    <source>
        <dbReference type="SAM" id="MobiDB-lite"/>
    </source>
</evidence>
<evidence type="ECO:0000305" key="6"/>
<feature type="signal peptide" evidence="2">
    <location>
        <begin position="1"/>
        <end position="26"/>
    </location>
</feature>
<feature type="chain" id="PRO_0000296644" description="Neuroendocrine protein 7B2">
    <location>
        <begin position="27"/>
        <end position="211"/>
    </location>
</feature>
<feature type="chain" id="PRO_0000296645" description="N-terminal peptide" evidence="1">
    <location>
        <begin position="27"/>
        <end position="175"/>
    </location>
</feature>
<feature type="peptide" id="PRO_0000296646" description="C-terminal peptide" evidence="4">
    <location>
        <begin position="199"/>
        <end position="211"/>
    </location>
</feature>
<feature type="region of interest" description="Disordered" evidence="5">
    <location>
        <begin position="106"/>
        <end position="132"/>
    </location>
</feature>
<feature type="region of interest" description="Disordered" evidence="5">
    <location>
        <begin position="173"/>
        <end position="211"/>
    </location>
</feature>
<feature type="modified residue" description="Phosphoserine" evidence="3">
    <location>
        <position position="140"/>
    </location>
</feature>
<feature type="modified residue" description="Phosphoserine" evidence="3">
    <location>
        <position position="204"/>
    </location>
</feature>
<feature type="disulfide bond" evidence="4">
    <location>
        <begin position="120"/>
        <end position="129"/>
    </location>
</feature>
<keyword id="KW-0143">Chaperone</keyword>
<keyword id="KW-0165">Cleavage on pair of basic residues</keyword>
<keyword id="KW-1015">Disulfide bond</keyword>
<keyword id="KW-0527">Neuropeptide</keyword>
<keyword id="KW-0597">Phosphoprotein</keyword>
<keyword id="KW-1185">Reference proteome</keyword>
<keyword id="KW-0964">Secreted</keyword>
<keyword id="KW-0732">Signal</keyword>
<keyword id="KW-0765">Sulfation</keyword>
<keyword id="KW-0813">Transport</keyword>
<gene>
    <name type="primary">SCG5</name>
</gene>
<name>7B2_PANTR</name>
<sequence>MVSRMVSTMLSGLLFWLASGWTPAFAYSPRTPDRVSEADIQRLLHGVMEQLGIARPRVEYPAHQAMNLVGPQSIEGGAHEGLQHLGPFGNIPNIVAELTGDNIPKDFSEDQGYPDPPNPCPVGKTDDGCLENTPDTAEFSREFQLHQHLFDPEHDYPGLGKWNKKLLYEKMKGGERRKRRSVNPYLQGQRLDNVVAKKSVPHFSDEDKDPE</sequence>